<protein>
    <recommendedName>
        <fullName evidence="1">Glutamyl-tRNA(Gln) amidotransferase subunit A</fullName>
        <shortName evidence="1">Glu-ADT subunit A</shortName>
        <ecNumber evidence="1">6.3.5.7</ecNumber>
    </recommendedName>
</protein>
<dbReference type="EC" id="6.3.5.7" evidence="1"/>
<dbReference type="EMBL" id="CP000099">
    <property type="protein sequence ID" value="AAZ69857.1"/>
    <property type="molecule type" value="Genomic_DNA"/>
</dbReference>
<dbReference type="SMR" id="Q46E35"/>
<dbReference type="STRING" id="269797.Mbar_A0883"/>
<dbReference type="PaxDb" id="269797-Mbar_A0883"/>
<dbReference type="KEGG" id="mba:Mbar_A0883"/>
<dbReference type="eggNOG" id="arCOG01717">
    <property type="taxonomic scope" value="Archaea"/>
</dbReference>
<dbReference type="HOGENOM" id="CLU_009600_0_3_2"/>
<dbReference type="OrthoDB" id="7931at2157"/>
<dbReference type="GO" id="GO:0030956">
    <property type="term" value="C:glutamyl-tRNA(Gln) amidotransferase complex"/>
    <property type="evidence" value="ECO:0007669"/>
    <property type="project" value="InterPro"/>
</dbReference>
<dbReference type="GO" id="GO:0005524">
    <property type="term" value="F:ATP binding"/>
    <property type="evidence" value="ECO:0007669"/>
    <property type="project" value="UniProtKB-KW"/>
</dbReference>
<dbReference type="GO" id="GO:0050567">
    <property type="term" value="F:glutaminyl-tRNA synthase (glutamine-hydrolyzing) activity"/>
    <property type="evidence" value="ECO:0007669"/>
    <property type="project" value="UniProtKB-UniRule"/>
</dbReference>
<dbReference type="GO" id="GO:0006412">
    <property type="term" value="P:translation"/>
    <property type="evidence" value="ECO:0007669"/>
    <property type="project" value="UniProtKB-UniRule"/>
</dbReference>
<dbReference type="Gene3D" id="3.90.1300.10">
    <property type="entry name" value="Amidase signature (AS) domain"/>
    <property type="match status" value="1"/>
</dbReference>
<dbReference type="HAMAP" id="MF_00120">
    <property type="entry name" value="GatA"/>
    <property type="match status" value="1"/>
</dbReference>
<dbReference type="InterPro" id="IPR000120">
    <property type="entry name" value="Amidase"/>
</dbReference>
<dbReference type="InterPro" id="IPR020556">
    <property type="entry name" value="Amidase_CS"/>
</dbReference>
<dbReference type="InterPro" id="IPR023631">
    <property type="entry name" value="Amidase_dom"/>
</dbReference>
<dbReference type="InterPro" id="IPR036928">
    <property type="entry name" value="AS_sf"/>
</dbReference>
<dbReference type="InterPro" id="IPR004412">
    <property type="entry name" value="GatA"/>
</dbReference>
<dbReference type="NCBIfam" id="TIGR00132">
    <property type="entry name" value="gatA"/>
    <property type="match status" value="1"/>
</dbReference>
<dbReference type="PANTHER" id="PTHR11895:SF7">
    <property type="entry name" value="GLUTAMYL-TRNA(GLN) AMIDOTRANSFERASE SUBUNIT A, MITOCHONDRIAL"/>
    <property type="match status" value="1"/>
</dbReference>
<dbReference type="PANTHER" id="PTHR11895">
    <property type="entry name" value="TRANSAMIDASE"/>
    <property type="match status" value="1"/>
</dbReference>
<dbReference type="Pfam" id="PF01425">
    <property type="entry name" value="Amidase"/>
    <property type="match status" value="1"/>
</dbReference>
<dbReference type="SUPFAM" id="SSF75304">
    <property type="entry name" value="Amidase signature (AS) enzymes"/>
    <property type="match status" value="1"/>
</dbReference>
<dbReference type="PROSITE" id="PS00571">
    <property type="entry name" value="AMIDASES"/>
    <property type="match status" value="1"/>
</dbReference>
<organism>
    <name type="scientific">Methanosarcina barkeri (strain Fusaro / DSM 804)</name>
    <dbReference type="NCBI Taxonomy" id="269797"/>
    <lineage>
        <taxon>Archaea</taxon>
        <taxon>Methanobacteriati</taxon>
        <taxon>Methanobacteriota</taxon>
        <taxon>Stenosarchaea group</taxon>
        <taxon>Methanomicrobia</taxon>
        <taxon>Methanosarcinales</taxon>
        <taxon>Methanosarcinaceae</taxon>
        <taxon>Methanosarcina</taxon>
    </lineage>
</organism>
<keyword id="KW-0067">ATP-binding</keyword>
<keyword id="KW-0436">Ligase</keyword>
<keyword id="KW-0547">Nucleotide-binding</keyword>
<keyword id="KW-0648">Protein biosynthesis</keyword>
<feature type="chain" id="PRO_0000241181" description="Glutamyl-tRNA(Gln) amidotransferase subunit A">
    <location>
        <begin position="1"/>
        <end position="475"/>
    </location>
</feature>
<feature type="active site" description="Charge relay system" evidence="1">
    <location>
        <position position="69"/>
    </location>
</feature>
<feature type="active site" description="Charge relay system" evidence="1">
    <location>
        <position position="144"/>
    </location>
</feature>
<feature type="active site" description="Acyl-ester intermediate" evidence="1">
    <location>
        <position position="168"/>
    </location>
</feature>
<comment type="function">
    <text evidence="1">Allows the formation of correctly charged Gln-tRNA(Gln) through the transamidation of misacylated Glu-tRNA(Gln) in organisms which lack glutaminyl-tRNA synthetase. The reaction takes place in the presence of glutamine and ATP through an activated gamma-phospho-Glu-tRNA(Gln).</text>
</comment>
<comment type="catalytic activity">
    <reaction evidence="1">
        <text>L-glutamyl-tRNA(Gln) + L-glutamine + ATP + H2O = L-glutaminyl-tRNA(Gln) + L-glutamate + ADP + phosphate + H(+)</text>
        <dbReference type="Rhea" id="RHEA:17521"/>
        <dbReference type="Rhea" id="RHEA-COMP:9681"/>
        <dbReference type="Rhea" id="RHEA-COMP:9684"/>
        <dbReference type="ChEBI" id="CHEBI:15377"/>
        <dbReference type="ChEBI" id="CHEBI:15378"/>
        <dbReference type="ChEBI" id="CHEBI:29985"/>
        <dbReference type="ChEBI" id="CHEBI:30616"/>
        <dbReference type="ChEBI" id="CHEBI:43474"/>
        <dbReference type="ChEBI" id="CHEBI:58359"/>
        <dbReference type="ChEBI" id="CHEBI:78520"/>
        <dbReference type="ChEBI" id="CHEBI:78521"/>
        <dbReference type="ChEBI" id="CHEBI:456216"/>
        <dbReference type="EC" id="6.3.5.7"/>
    </reaction>
</comment>
<comment type="subunit">
    <text evidence="1">Heterotrimer of A, B and C subunits.</text>
</comment>
<comment type="similarity">
    <text evidence="1">Belongs to the amidase family. GatA subfamily.</text>
</comment>
<accession>Q46E35</accession>
<evidence type="ECO:0000255" key="1">
    <source>
        <dbReference type="HAMAP-Rule" id="MF_00120"/>
    </source>
</evidence>
<sequence>MAKWMSVAQVKEKIKESSAEEVTAQYLDTIGKSKVNGYITVSEKALEQAKKIDVEGHNGPLAGVPIAIKDNISVVGLPNSCGSKILEDYIPPFNAYVIEKLLAAGAVILGKTNMDEFAMGSSTETSYFGPTANPWDLERVPGGSSGGSAAVVAAGEAPFALGSDTGGSVRCPAAFCGVVGLKPTYGAVSRYGVVAYANSLEQVGPLANNVTDIAVLMDVIAGYDRKDSTSIDSKTEYQKALIEDVKGLKIGVPKEFFGEGIHPDVEKAVWNAIHKCEDLGASWEEVSMPHIKYALASYYIIAMSEASSNLARFDGTRYGYRASGENWHAMVSKTRAEGFGTEVKRRILLGTYALSAGYHDKYYLKALKVRTLVKQDFDKALSKVDVLMAPTMPNPAFKIGEKIEDPLTLYLSDVNTCPINLAGVPSLSVPCGFTDGLPIGLQIMGKPFDEPAVLRAAYTFEQNTDYHTKRPPEVA</sequence>
<proteinExistence type="inferred from homology"/>
<gene>
    <name evidence="1" type="primary">gatA</name>
    <name type="ordered locus">Mbar_A0883</name>
</gene>
<name>GATA_METBF</name>
<reference key="1">
    <citation type="journal article" date="2006" name="J. Bacteriol.">
        <title>The Methanosarcina barkeri genome: comparative analysis with Methanosarcina acetivorans and Methanosarcina mazei reveals extensive rearrangement within methanosarcinal genomes.</title>
        <authorList>
            <person name="Maeder D.L."/>
            <person name="Anderson I."/>
            <person name="Brettin T.S."/>
            <person name="Bruce D.C."/>
            <person name="Gilna P."/>
            <person name="Han C.S."/>
            <person name="Lapidus A."/>
            <person name="Metcalf W.W."/>
            <person name="Saunders E."/>
            <person name="Tapia R."/>
            <person name="Sowers K.R."/>
        </authorList>
    </citation>
    <scope>NUCLEOTIDE SEQUENCE [LARGE SCALE GENOMIC DNA]</scope>
    <source>
        <strain>Fusaro / DSM 804</strain>
    </source>
</reference>